<keyword id="KW-1003">Cell membrane</keyword>
<keyword id="KW-0472">Membrane</keyword>
<keyword id="KW-1185">Reference proteome</keyword>
<keyword id="KW-0812">Transmembrane</keyword>
<keyword id="KW-1133">Transmembrane helix</keyword>
<evidence type="ECO:0000255" key="1"/>
<evidence type="ECO:0000305" key="2"/>
<gene>
    <name type="primary">yozV</name>
    <name type="ordered locus">BSU18849</name>
</gene>
<accession>C0H423</accession>
<comment type="subcellular location">
    <subcellularLocation>
        <location evidence="2">Cell membrane</location>
        <topology evidence="2">Multi-pass membrane protein</topology>
    </subcellularLocation>
</comment>
<proteinExistence type="predicted"/>
<feature type="chain" id="PRO_0000389132" description="Uncharacterized membrane protein YozV">
    <location>
        <begin position="1"/>
        <end position="79"/>
    </location>
</feature>
<feature type="transmembrane region" description="Helical" evidence="1">
    <location>
        <begin position="8"/>
        <end position="28"/>
    </location>
</feature>
<feature type="transmembrane region" description="Helical" evidence="1">
    <location>
        <begin position="37"/>
        <end position="57"/>
    </location>
</feature>
<feature type="domain" description="TM2" evidence="1">
    <location>
        <begin position="3"/>
        <end position="54"/>
    </location>
</feature>
<organism>
    <name type="scientific">Bacillus subtilis (strain 168)</name>
    <dbReference type="NCBI Taxonomy" id="224308"/>
    <lineage>
        <taxon>Bacteria</taxon>
        <taxon>Bacillati</taxon>
        <taxon>Bacillota</taxon>
        <taxon>Bacilli</taxon>
        <taxon>Bacillales</taxon>
        <taxon>Bacillaceae</taxon>
        <taxon>Bacillus</taxon>
    </lineage>
</organism>
<sequence length="79" mass="9047">MVSKKNKIVAALLAFFFGGLGIHKFYLGRVGQGILYILFCWTGIPSIIAFIEFIIFLCGSEEGFDQKYNFYYFQQQSKA</sequence>
<reference key="1">
    <citation type="submission" date="2009-08" db="EMBL/GenBank/DDBJ databases">
        <title>Cloning of a xylanase gene from Bacillus subtilis BE-91 and its expression in Escherichia coli.</title>
        <authorList>
            <person name="Liu Z."/>
            <person name="Xu J."/>
            <person name="Zhang J."/>
        </authorList>
    </citation>
    <scope>NUCLEOTIDE SEQUENCE [GENOMIC DNA]</scope>
    <source>
        <strain>BE-91</strain>
    </source>
</reference>
<reference key="2">
    <citation type="journal article" date="1997" name="Nature">
        <title>The complete genome sequence of the Gram-positive bacterium Bacillus subtilis.</title>
        <authorList>
            <person name="Kunst F."/>
            <person name="Ogasawara N."/>
            <person name="Moszer I."/>
            <person name="Albertini A.M."/>
            <person name="Alloni G."/>
            <person name="Azevedo V."/>
            <person name="Bertero M.G."/>
            <person name="Bessieres P."/>
            <person name="Bolotin A."/>
            <person name="Borchert S."/>
            <person name="Borriss R."/>
            <person name="Boursier L."/>
            <person name="Brans A."/>
            <person name="Braun M."/>
            <person name="Brignell S.C."/>
            <person name="Bron S."/>
            <person name="Brouillet S."/>
            <person name="Bruschi C.V."/>
            <person name="Caldwell B."/>
            <person name="Capuano V."/>
            <person name="Carter N.M."/>
            <person name="Choi S.-K."/>
            <person name="Codani J.-J."/>
            <person name="Connerton I.F."/>
            <person name="Cummings N.J."/>
            <person name="Daniel R.A."/>
            <person name="Denizot F."/>
            <person name="Devine K.M."/>
            <person name="Duesterhoeft A."/>
            <person name="Ehrlich S.D."/>
            <person name="Emmerson P.T."/>
            <person name="Entian K.-D."/>
            <person name="Errington J."/>
            <person name="Fabret C."/>
            <person name="Ferrari E."/>
            <person name="Foulger D."/>
            <person name="Fritz C."/>
            <person name="Fujita M."/>
            <person name="Fujita Y."/>
            <person name="Fuma S."/>
            <person name="Galizzi A."/>
            <person name="Galleron N."/>
            <person name="Ghim S.-Y."/>
            <person name="Glaser P."/>
            <person name="Goffeau A."/>
            <person name="Golightly E.J."/>
            <person name="Grandi G."/>
            <person name="Guiseppi G."/>
            <person name="Guy B.J."/>
            <person name="Haga K."/>
            <person name="Haiech J."/>
            <person name="Harwood C.R."/>
            <person name="Henaut A."/>
            <person name="Hilbert H."/>
            <person name="Holsappel S."/>
            <person name="Hosono S."/>
            <person name="Hullo M.-F."/>
            <person name="Itaya M."/>
            <person name="Jones L.-M."/>
            <person name="Joris B."/>
            <person name="Karamata D."/>
            <person name="Kasahara Y."/>
            <person name="Klaerr-Blanchard M."/>
            <person name="Klein C."/>
            <person name="Kobayashi Y."/>
            <person name="Koetter P."/>
            <person name="Koningstein G."/>
            <person name="Krogh S."/>
            <person name="Kumano M."/>
            <person name="Kurita K."/>
            <person name="Lapidus A."/>
            <person name="Lardinois S."/>
            <person name="Lauber J."/>
            <person name="Lazarevic V."/>
            <person name="Lee S.-M."/>
            <person name="Levine A."/>
            <person name="Liu H."/>
            <person name="Masuda S."/>
            <person name="Mauel C."/>
            <person name="Medigue C."/>
            <person name="Medina N."/>
            <person name="Mellado R.P."/>
            <person name="Mizuno M."/>
            <person name="Moestl D."/>
            <person name="Nakai S."/>
            <person name="Noback M."/>
            <person name="Noone D."/>
            <person name="O'Reilly M."/>
            <person name="Ogawa K."/>
            <person name="Ogiwara A."/>
            <person name="Oudega B."/>
            <person name="Park S.-H."/>
            <person name="Parro V."/>
            <person name="Pohl T.M."/>
            <person name="Portetelle D."/>
            <person name="Porwollik S."/>
            <person name="Prescott A.M."/>
            <person name="Presecan E."/>
            <person name="Pujic P."/>
            <person name="Purnelle B."/>
            <person name="Rapoport G."/>
            <person name="Rey M."/>
            <person name="Reynolds S."/>
            <person name="Rieger M."/>
            <person name="Rivolta C."/>
            <person name="Rocha E."/>
            <person name="Roche B."/>
            <person name="Rose M."/>
            <person name="Sadaie Y."/>
            <person name="Sato T."/>
            <person name="Scanlan E."/>
            <person name="Schleich S."/>
            <person name="Schroeter R."/>
            <person name="Scoffone F."/>
            <person name="Sekiguchi J."/>
            <person name="Sekowska A."/>
            <person name="Seror S.J."/>
            <person name="Serror P."/>
            <person name="Shin B.-S."/>
            <person name="Soldo B."/>
            <person name="Sorokin A."/>
            <person name="Tacconi E."/>
            <person name="Takagi T."/>
            <person name="Takahashi H."/>
            <person name="Takemaru K."/>
            <person name="Takeuchi M."/>
            <person name="Tamakoshi A."/>
            <person name="Tanaka T."/>
            <person name="Terpstra P."/>
            <person name="Tognoni A."/>
            <person name="Tosato V."/>
            <person name="Uchiyama S."/>
            <person name="Vandenbol M."/>
            <person name="Vannier F."/>
            <person name="Vassarotti A."/>
            <person name="Viari A."/>
            <person name="Wambutt R."/>
            <person name="Wedler E."/>
            <person name="Wedler H."/>
            <person name="Weitzenegger T."/>
            <person name="Winters P."/>
            <person name="Wipat A."/>
            <person name="Yamamoto H."/>
            <person name="Yamane K."/>
            <person name="Yasumoto K."/>
            <person name="Yata K."/>
            <person name="Yoshida K."/>
            <person name="Yoshikawa H.-F."/>
            <person name="Zumstein E."/>
            <person name="Yoshikawa H."/>
            <person name="Danchin A."/>
        </authorList>
    </citation>
    <scope>NUCLEOTIDE SEQUENCE [LARGE SCALE GENOMIC DNA]</scope>
    <source>
        <strain>168</strain>
    </source>
</reference>
<name>YOZV_BACSU</name>
<protein>
    <recommendedName>
        <fullName>Uncharacterized membrane protein YozV</fullName>
    </recommendedName>
</protein>
<dbReference type="EMBL" id="GQ845010">
    <property type="protein sequence ID" value="ACX55060.1"/>
    <property type="molecule type" value="Genomic_DNA"/>
</dbReference>
<dbReference type="EMBL" id="AL009126">
    <property type="protein sequence ID" value="CAX52631.1"/>
    <property type="molecule type" value="Genomic_DNA"/>
</dbReference>
<dbReference type="RefSeq" id="WP_003231362.1">
    <property type="nucleotide sequence ID" value="NZ_OZ025638.1"/>
</dbReference>
<dbReference type="RefSeq" id="YP_003097736.1">
    <property type="nucleotide sequence ID" value="NC_000964.3"/>
</dbReference>
<dbReference type="FunCoup" id="C0H423">
    <property type="interactions" value="3"/>
</dbReference>
<dbReference type="STRING" id="224308.BSU18849"/>
<dbReference type="PaxDb" id="224308-BSU18849"/>
<dbReference type="EnsemblBacteria" id="CAX52631">
    <property type="protein sequence ID" value="CAX52631"/>
    <property type="gene ID" value="BSU_18849"/>
</dbReference>
<dbReference type="GeneID" id="8303004"/>
<dbReference type="KEGG" id="bsu:BSU18849"/>
<dbReference type="PATRIC" id="fig|224308.179.peg.2055"/>
<dbReference type="eggNOG" id="COG2314">
    <property type="taxonomic scope" value="Bacteria"/>
</dbReference>
<dbReference type="InParanoid" id="C0H423"/>
<dbReference type="BioCyc" id="BSUB:BSU18849-MONOMER"/>
<dbReference type="Proteomes" id="UP000001570">
    <property type="component" value="Chromosome"/>
</dbReference>
<dbReference type="GO" id="GO:0005886">
    <property type="term" value="C:plasma membrane"/>
    <property type="evidence" value="ECO:0007669"/>
    <property type="project" value="UniProtKB-SubCell"/>
</dbReference>
<dbReference type="InterPro" id="IPR007829">
    <property type="entry name" value="TM2"/>
</dbReference>
<dbReference type="Pfam" id="PF05154">
    <property type="entry name" value="TM2"/>
    <property type="match status" value="1"/>
</dbReference>